<feature type="chain" id="PRO_0000265831" description="ATP synthase epsilon chain">
    <location>
        <begin position="1"/>
        <end position="133"/>
    </location>
</feature>
<accession>Q1MRB7</accession>
<evidence type="ECO:0000255" key="1">
    <source>
        <dbReference type="HAMAP-Rule" id="MF_00530"/>
    </source>
</evidence>
<proteinExistence type="inferred from homology"/>
<protein>
    <recommendedName>
        <fullName evidence="1">ATP synthase epsilon chain</fullName>
    </recommendedName>
    <alternativeName>
        <fullName evidence="1">ATP synthase F1 sector epsilon subunit</fullName>
    </alternativeName>
    <alternativeName>
        <fullName evidence="1">F-ATPase epsilon subunit</fullName>
    </alternativeName>
</protein>
<keyword id="KW-0066">ATP synthesis</keyword>
<keyword id="KW-1003">Cell membrane</keyword>
<keyword id="KW-0139">CF(1)</keyword>
<keyword id="KW-0375">Hydrogen ion transport</keyword>
<keyword id="KW-0406">Ion transport</keyword>
<keyword id="KW-0472">Membrane</keyword>
<keyword id="KW-1185">Reference proteome</keyword>
<keyword id="KW-0813">Transport</keyword>
<dbReference type="EMBL" id="AM180252">
    <property type="protein sequence ID" value="CAJ54459.1"/>
    <property type="molecule type" value="Genomic_DNA"/>
</dbReference>
<dbReference type="RefSeq" id="WP_011526489.1">
    <property type="nucleotide sequence ID" value="NC_008011.1"/>
</dbReference>
<dbReference type="SMR" id="Q1MRB7"/>
<dbReference type="STRING" id="363253.LI0404"/>
<dbReference type="KEGG" id="lip:LI0404"/>
<dbReference type="eggNOG" id="COG0355">
    <property type="taxonomic scope" value="Bacteria"/>
</dbReference>
<dbReference type="HOGENOM" id="CLU_084338_1_3_7"/>
<dbReference type="OrthoDB" id="9799969at2"/>
<dbReference type="Proteomes" id="UP000002430">
    <property type="component" value="Chromosome"/>
</dbReference>
<dbReference type="GO" id="GO:0005886">
    <property type="term" value="C:plasma membrane"/>
    <property type="evidence" value="ECO:0007669"/>
    <property type="project" value="UniProtKB-SubCell"/>
</dbReference>
<dbReference type="GO" id="GO:0045259">
    <property type="term" value="C:proton-transporting ATP synthase complex"/>
    <property type="evidence" value="ECO:0007669"/>
    <property type="project" value="UniProtKB-KW"/>
</dbReference>
<dbReference type="GO" id="GO:0005524">
    <property type="term" value="F:ATP binding"/>
    <property type="evidence" value="ECO:0007669"/>
    <property type="project" value="UniProtKB-UniRule"/>
</dbReference>
<dbReference type="GO" id="GO:0046933">
    <property type="term" value="F:proton-transporting ATP synthase activity, rotational mechanism"/>
    <property type="evidence" value="ECO:0007669"/>
    <property type="project" value="UniProtKB-UniRule"/>
</dbReference>
<dbReference type="CDD" id="cd12152">
    <property type="entry name" value="F1-ATPase_delta"/>
    <property type="match status" value="1"/>
</dbReference>
<dbReference type="Gene3D" id="1.20.5.440">
    <property type="entry name" value="ATP synthase delta/epsilon subunit, C-terminal domain"/>
    <property type="match status" value="1"/>
</dbReference>
<dbReference type="Gene3D" id="2.60.15.10">
    <property type="entry name" value="F0F1 ATP synthase delta/epsilon subunit, N-terminal"/>
    <property type="match status" value="1"/>
</dbReference>
<dbReference type="HAMAP" id="MF_00530">
    <property type="entry name" value="ATP_synth_epsil_bac"/>
    <property type="match status" value="1"/>
</dbReference>
<dbReference type="InterPro" id="IPR036794">
    <property type="entry name" value="ATP_F1_dsu/esu_C_sf"/>
</dbReference>
<dbReference type="InterPro" id="IPR001469">
    <property type="entry name" value="ATP_synth_F1_dsu/esu"/>
</dbReference>
<dbReference type="InterPro" id="IPR020546">
    <property type="entry name" value="ATP_synth_F1_dsu/esu_N"/>
</dbReference>
<dbReference type="InterPro" id="IPR020547">
    <property type="entry name" value="ATP_synth_F1_esu_C"/>
</dbReference>
<dbReference type="InterPro" id="IPR036771">
    <property type="entry name" value="ATPsynth_dsu/esu_N"/>
</dbReference>
<dbReference type="NCBIfam" id="TIGR01216">
    <property type="entry name" value="ATP_synt_epsi"/>
    <property type="match status" value="1"/>
</dbReference>
<dbReference type="NCBIfam" id="NF009980">
    <property type="entry name" value="PRK13446.1"/>
    <property type="match status" value="1"/>
</dbReference>
<dbReference type="PANTHER" id="PTHR13822">
    <property type="entry name" value="ATP SYNTHASE DELTA/EPSILON CHAIN"/>
    <property type="match status" value="1"/>
</dbReference>
<dbReference type="PANTHER" id="PTHR13822:SF10">
    <property type="entry name" value="ATP SYNTHASE EPSILON CHAIN, CHLOROPLASTIC"/>
    <property type="match status" value="1"/>
</dbReference>
<dbReference type="Pfam" id="PF00401">
    <property type="entry name" value="ATP-synt_DE"/>
    <property type="match status" value="1"/>
</dbReference>
<dbReference type="Pfam" id="PF02823">
    <property type="entry name" value="ATP-synt_DE_N"/>
    <property type="match status" value="1"/>
</dbReference>
<dbReference type="SUPFAM" id="SSF46604">
    <property type="entry name" value="Epsilon subunit of F1F0-ATP synthase C-terminal domain"/>
    <property type="match status" value="1"/>
</dbReference>
<dbReference type="SUPFAM" id="SSF51344">
    <property type="entry name" value="Epsilon subunit of F1F0-ATP synthase N-terminal domain"/>
    <property type="match status" value="1"/>
</dbReference>
<sequence>MEQSLHLEIISPDHTIVSDRVTYVNLPGVNGELGILPGHIPLMAALDIGKLHYQQDSKNYYVFISAGFAEVSNNKVTVLTEAAEKASEIDVARAQAAKERAKARLLKAEEDIDMARAEAAMHRAIIRLNISSL</sequence>
<name>ATPE_LAWIP</name>
<gene>
    <name evidence="1" type="primary">atpC</name>
    <name type="ordered locus">LI0404</name>
</gene>
<comment type="function">
    <text evidence="1">Produces ATP from ADP in the presence of a proton gradient across the membrane.</text>
</comment>
<comment type="subunit">
    <text>F-type ATPases have 2 components, CF(1) - the catalytic core - and CF(0) - the membrane proton channel. CF(1) has five subunits: alpha(3), beta(3), gamma(1), delta(1), epsilon(1). CF(0) has three main subunits: a, b and c.</text>
</comment>
<comment type="subcellular location">
    <subcellularLocation>
        <location evidence="1">Cell membrane</location>
        <topology evidence="1">Peripheral membrane protein</topology>
    </subcellularLocation>
</comment>
<comment type="similarity">
    <text evidence="1">Belongs to the ATPase epsilon chain family.</text>
</comment>
<organism>
    <name type="scientific">Lawsonia intracellularis (strain PHE/MN1-00)</name>
    <dbReference type="NCBI Taxonomy" id="363253"/>
    <lineage>
        <taxon>Bacteria</taxon>
        <taxon>Pseudomonadati</taxon>
        <taxon>Thermodesulfobacteriota</taxon>
        <taxon>Desulfovibrionia</taxon>
        <taxon>Desulfovibrionales</taxon>
        <taxon>Desulfovibrionaceae</taxon>
        <taxon>Lawsonia</taxon>
    </lineage>
</organism>
<reference key="1">
    <citation type="submission" date="2005-11" db="EMBL/GenBank/DDBJ databases">
        <title>The complete genome sequence of Lawsonia intracellularis: the causative agent of proliferative enteropathy.</title>
        <authorList>
            <person name="Kaur K."/>
            <person name="Zhang Q."/>
            <person name="Beckler D."/>
            <person name="Munir S."/>
            <person name="Li L."/>
            <person name="Kinsley K."/>
            <person name="Herron L."/>
            <person name="Peterson A."/>
            <person name="May B."/>
            <person name="Singh S."/>
            <person name="Gebhart C."/>
            <person name="Kapur V."/>
        </authorList>
    </citation>
    <scope>NUCLEOTIDE SEQUENCE [LARGE SCALE GENOMIC DNA]</scope>
    <source>
        <strain>PHE/MN1-00</strain>
    </source>
</reference>